<dbReference type="EC" id="3.6.5.-" evidence="4"/>
<dbReference type="EMBL" id="AB125195">
    <property type="protein sequence ID" value="BAD51983.1"/>
    <property type="molecule type" value="mRNA"/>
</dbReference>
<dbReference type="RefSeq" id="NP_001274574.1">
    <property type="nucleotide sequence ID" value="NM_001287645.1"/>
</dbReference>
<dbReference type="RefSeq" id="XP_005561274.1">
    <property type="nucleotide sequence ID" value="XM_005561217.2"/>
</dbReference>
<dbReference type="RefSeq" id="XP_045252323.1">
    <property type="nucleotide sequence ID" value="XM_045396388.2"/>
</dbReference>
<dbReference type="SMR" id="Q60HD2"/>
<dbReference type="STRING" id="9541.ENSMFAP00000045617"/>
<dbReference type="Ensembl" id="ENSMFAT00000019921.2">
    <property type="protein sequence ID" value="ENSMFAP00000045617.1"/>
    <property type="gene ID" value="ENSMFAG00000000528.2"/>
</dbReference>
<dbReference type="GeneID" id="102139537"/>
<dbReference type="VEuPathDB" id="HostDB:ENSMFAG00000000528"/>
<dbReference type="eggNOG" id="KOG2037">
    <property type="taxonomic scope" value="Eukaryota"/>
</dbReference>
<dbReference type="GeneTree" id="ENSGT00940000158704"/>
<dbReference type="Proteomes" id="UP000233100">
    <property type="component" value="Chromosome 7"/>
</dbReference>
<dbReference type="Bgee" id="ENSMFAG00000000528">
    <property type="expression patterns" value="Expressed in temporal lobe and 11 other cell types or tissues"/>
</dbReference>
<dbReference type="GO" id="GO:0030424">
    <property type="term" value="C:axon"/>
    <property type="evidence" value="ECO:0007669"/>
    <property type="project" value="UniProtKB-SubCell"/>
</dbReference>
<dbReference type="GO" id="GO:0005783">
    <property type="term" value="C:endoplasmic reticulum"/>
    <property type="evidence" value="ECO:0000250"/>
    <property type="project" value="UniProtKB"/>
</dbReference>
<dbReference type="GO" id="GO:0005789">
    <property type="term" value="C:endoplasmic reticulum membrane"/>
    <property type="evidence" value="ECO:0000250"/>
    <property type="project" value="UniProtKB"/>
</dbReference>
<dbReference type="GO" id="GO:0071782">
    <property type="term" value="C:endoplasmic reticulum tubular network"/>
    <property type="evidence" value="ECO:0000250"/>
    <property type="project" value="UniProtKB"/>
</dbReference>
<dbReference type="GO" id="GO:0098826">
    <property type="term" value="C:endoplasmic reticulum tubular network membrane"/>
    <property type="evidence" value="ECO:0000250"/>
    <property type="project" value="UniProtKB"/>
</dbReference>
<dbReference type="GO" id="GO:0005794">
    <property type="term" value="C:Golgi apparatus"/>
    <property type="evidence" value="ECO:0000250"/>
    <property type="project" value="UniProtKB"/>
</dbReference>
<dbReference type="GO" id="GO:1990674">
    <property type="term" value="C:Golgi cis cisterna membrane"/>
    <property type="evidence" value="ECO:0000250"/>
    <property type="project" value="UniProtKB"/>
</dbReference>
<dbReference type="GO" id="GO:0000139">
    <property type="term" value="C:Golgi membrane"/>
    <property type="evidence" value="ECO:0007669"/>
    <property type="project" value="UniProtKB-SubCell"/>
</dbReference>
<dbReference type="GO" id="GO:0005525">
    <property type="term" value="F:GTP binding"/>
    <property type="evidence" value="ECO:0000250"/>
    <property type="project" value="UniProtKB"/>
</dbReference>
<dbReference type="GO" id="GO:0140523">
    <property type="term" value="F:GTPase-dependent fusogenic activity"/>
    <property type="evidence" value="ECO:0000250"/>
    <property type="project" value="UniProtKB"/>
</dbReference>
<dbReference type="GO" id="GO:0042802">
    <property type="term" value="F:identical protein binding"/>
    <property type="evidence" value="ECO:0000250"/>
    <property type="project" value="UniProtKB"/>
</dbReference>
<dbReference type="GO" id="GO:0007409">
    <property type="term" value="P:axonogenesis"/>
    <property type="evidence" value="ECO:0000250"/>
    <property type="project" value="UniProtKB"/>
</dbReference>
<dbReference type="GO" id="GO:0016320">
    <property type="term" value="P:endoplasmic reticulum membrane fusion"/>
    <property type="evidence" value="ECO:0000250"/>
    <property type="project" value="UniProtKB"/>
</dbReference>
<dbReference type="GO" id="GO:1990809">
    <property type="term" value="P:endoplasmic reticulum tubular network membrane organization"/>
    <property type="evidence" value="ECO:0000250"/>
    <property type="project" value="UniProtKB"/>
</dbReference>
<dbReference type="CDD" id="cd01851">
    <property type="entry name" value="GBP"/>
    <property type="match status" value="1"/>
</dbReference>
<dbReference type="FunFam" id="1.20.58.420:FF:000001">
    <property type="entry name" value="Atlastin-1 isoform 1"/>
    <property type="match status" value="1"/>
</dbReference>
<dbReference type="FunFam" id="3.40.50.300:FF:000497">
    <property type="entry name" value="Atlastin-1 isoform 1"/>
    <property type="match status" value="1"/>
</dbReference>
<dbReference type="Gene3D" id="1.20.58.420">
    <property type="entry name" value="AHSP"/>
    <property type="match status" value="1"/>
</dbReference>
<dbReference type="Gene3D" id="3.40.50.300">
    <property type="entry name" value="P-loop containing nucleotide triphosphate hydrolases"/>
    <property type="match status" value="1"/>
</dbReference>
<dbReference type="InterPro" id="IPR030386">
    <property type="entry name" value="G_GB1_RHD3_dom"/>
</dbReference>
<dbReference type="InterPro" id="IPR036543">
    <property type="entry name" value="Guanylate-bd_C_sf"/>
</dbReference>
<dbReference type="InterPro" id="IPR015894">
    <property type="entry name" value="Guanylate-bd_N"/>
</dbReference>
<dbReference type="InterPro" id="IPR027417">
    <property type="entry name" value="P-loop_NTPase"/>
</dbReference>
<dbReference type="PANTHER" id="PTHR10751">
    <property type="entry name" value="GUANYLATE BINDING PROTEIN"/>
    <property type="match status" value="1"/>
</dbReference>
<dbReference type="Pfam" id="PF02263">
    <property type="entry name" value="GBP"/>
    <property type="match status" value="1"/>
</dbReference>
<dbReference type="SUPFAM" id="SSF48340">
    <property type="entry name" value="Interferon-induced guanylate-binding protein 1 (GBP1), C-terminal domain"/>
    <property type="match status" value="1"/>
</dbReference>
<dbReference type="SUPFAM" id="SSF52540">
    <property type="entry name" value="P-loop containing nucleoside triphosphate hydrolases"/>
    <property type="match status" value="1"/>
</dbReference>
<dbReference type="PROSITE" id="PS51715">
    <property type="entry name" value="G_GB1_RHD3"/>
    <property type="match status" value="1"/>
</dbReference>
<feature type="chain" id="PRO_0000190972" description="Atlastin-1">
    <location>
        <begin position="1"/>
        <end position="558"/>
    </location>
</feature>
<feature type="topological domain" description="Cytoplasmic" evidence="4">
    <location>
        <begin position="1"/>
        <end position="449"/>
    </location>
</feature>
<feature type="transmembrane region" description="Helical" evidence="5">
    <location>
        <begin position="450"/>
        <end position="470"/>
    </location>
</feature>
<feature type="topological domain" description="Lumenal" evidence="4">
    <location>
        <position position="471"/>
    </location>
</feature>
<feature type="transmembrane region" description="Helical" evidence="5">
    <location>
        <begin position="472"/>
        <end position="492"/>
    </location>
</feature>
<feature type="topological domain" description="Cytoplasmic" evidence="4">
    <location>
        <begin position="493"/>
        <end position="558"/>
    </location>
</feature>
<feature type="domain" description="GB1/RHD3-type G" evidence="6">
    <location>
        <begin position="64"/>
        <end position="309"/>
    </location>
</feature>
<feature type="region of interest" description="N-terminal hypervariable region (HVR)" evidence="4">
    <location>
        <begin position="1"/>
        <end position="34"/>
    </location>
</feature>
<feature type="region of interest" description="Disordered" evidence="7">
    <location>
        <begin position="1"/>
        <end position="27"/>
    </location>
</feature>
<feature type="region of interest" description="3HB (three-helix bundle) domain" evidence="4">
    <location>
        <begin position="347"/>
        <end position="438"/>
    </location>
</feature>
<feature type="region of interest" description="Linker" evidence="4">
    <location>
        <begin position="439"/>
        <end position="447"/>
    </location>
</feature>
<feature type="region of interest" description="Autoinhibitory domain" evidence="4">
    <location>
        <begin position="521"/>
        <end position="558"/>
    </location>
</feature>
<feature type="coiled-coil region" evidence="5">
    <location>
        <begin position="412"/>
        <end position="439"/>
    </location>
</feature>
<feature type="binding site" evidence="4">
    <location>
        <position position="77"/>
    </location>
    <ligand>
        <name>GDP</name>
        <dbReference type="ChEBI" id="CHEBI:58189"/>
    </ligand>
</feature>
<feature type="binding site" evidence="4">
    <location>
        <position position="77"/>
    </location>
    <ligand>
        <name>GTP</name>
        <dbReference type="ChEBI" id="CHEBI:37565"/>
    </ligand>
</feature>
<feature type="binding site" evidence="4">
    <location>
        <position position="78"/>
    </location>
    <ligand>
        <name>GDP</name>
        <dbReference type="ChEBI" id="CHEBI:58189"/>
    </ligand>
</feature>
<feature type="binding site" evidence="4">
    <location>
        <position position="78"/>
    </location>
    <ligand>
        <name>GTP</name>
        <dbReference type="ChEBI" id="CHEBI:37565"/>
    </ligand>
</feature>
<feature type="binding site" evidence="4">
    <location>
        <position position="79"/>
    </location>
    <ligand>
        <name>GDP</name>
        <dbReference type="ChEBI" id="CHEBI:58189"/>
    </ligand>
</feature>
<feature type="binding site" evidence="4">
    <location>
        <position position="79"/>
    </location>
    <ligand>
        <name>GTP</name>
        <dbReference type="ChEBI" id="CHEBI:37565"/>
    </ligand>
</feature>
<feature type="binding site" evidence="4">
    <location>
        <position position="80"/>
    </location>
    <ligand>
        <name>GDP</name>
        <dbReference type="ChEBI" id="CHEBI:58189"/>
    </ligand>
</feature>
<feature type="binding site" evidence="4">
    <location>
        <position position="80"/>
    </location>
    <ligand>
        <name>GTP</name>
        <dbReference type="ChEBI" id="CHEBI:37565"/>
    </ligand>
</feature>
<feature type="binding site" evidence="4">
    <location>
        <position position="81"/>
    </location>
    <ligand>
        <name>GDP</name>
        <dbReference type="ChEBI" id="CHEBI:58189"/>
    </ligand>
</feature>
<feature type="binding site" evidence="4">
    <location>
        <position position="81"/>
    </location>
    <ligand>
        <name>GTP</name>
        <dbReference type="ChEBI" id="CHEBI:37565"/>
    </ligand>
</feature>
<feature type="binding site" evidence="4">
    <location>
        <position position="81"/>
    </location>
    <ligand>
        <name>Mg(2+)</name>
        <dbReference type="ChEBI" id="CHEBI:18420"/>
    </ligand>
</feature>
<feature type="binding site" evidence="4">
    <location>
        <position position="82"/>
    </location>
    <ligand>
        <name>GDP</name>
        <dbReference type="ChEBI" id="CHEBI:58189"/>
    </ligand>
</feature>
<feature type="binding site" evidence="4">
    <location>
        <position position="82"/>
    </location>
    <ligand>
        <name>GTP</name>
        <dbReference type="ChEBI" id="CHEBI:37565"/>
    </ligand>
</feature>
<feature type="binding site" evidence="4">
    <location>
        <position position="148"/>
    </location>
    <ligand>
        <name>GDP</name>
        <dbReference type="ChEBI" id="CHEBI:58189"/>
    </ligand>
</feature>
<feature type="binding site" evidence="4">
    <location>
        <position position="217"/>
    </location>
    <ligand>
        <name>GDP</name>
        <dbReference type="ChEBI" id="CHEBI:58189"/>
    </ligand>
</feature>
<feature type="binding site" evidence="4">
    <location>
        <position position="217"/>
    </location>
    <ligand>
        <name>GTP</name>
        <dbReference type="ChEBI" id="CHEBI:37565"/>
    </ligand>
</feature>
<feature type="binding site" evidence="4">
    <location>
        <position position="218"/>
    </location>
    <ligand>
        <name>GDP</name>
        <dbReference type="ChEBI" id="CHEBI:58189"/>
    </ligand>
</feature>
<feature type="binding site" evidence="4">
    <location>
        <position position="218"/>
    </location>
    <ligand>
        <name>GTP</name>
        <dbReference type="ChEBI" id="CHEBI:37565"/>
    </ligand>
</feature>
<feature type="binding site" evidence="4">
    <location>
        <position position="276"/>
    </location>
    <ligand>
        <name>GDP</name>
        <dbReference type="ChEBI" id="CHEBI:58189"/>
    </ligand>
</feature>
<feature type="binding site" evidence="4">
    <location>
        <position position="276"/>
    </location>
    <ligand>
        <name>GTP</name>
        <dbReference type="ChEBI" id="CHEBI:37565"/>
    </ligand>
</feature>
<feature type="binding site" evidence="4">
    <location>
        <position position="279"/>
    </location>
    <ligand>
        <name>GDP</name>
        <dbReference type="ChEBI" id="CHEBI:58189"/>
    </ligand>
</feature>
<feature type="modified residue" description="Phosphoserine" evidence="3">
    <location>
        <position position="10"/>
    </location>
</feature>
<feature type="modified residue" description="Phosphoserine" evidence="3">
    <location>
        <position position="22"/>
    </location>
</feature>
<feature type="modified residue" description="Phosphoserine" evidence="3">
    <location>
        <position position="23"/>
    </location>
</feature>
<feature type="modified residue" description="N6-acetyllysine" evidence="1">
    <location>
        <position position="395"/>
    </location>
</feature>
<keyword id="KW-0007">Acetylation</keyword>
<keyword id="KW-0966">Cell projection</keyword>
<keyword id="KW-0175">Coiled coil</keyword>
<keyword id="KW-0256">Endoplasmic reticulum</keyword>
<keyword id="KW-0333">Golgi apparatus</keyword>
<keyword id="KW-0342">GTP-binding</keyword>
<keyword id="KW-0378">Hydrolase</keyword>
<keyword id="KW-0460">Magnesium</keyword>
<keyword id="KW-0472">Membrane</keyword>
<keyword id="KW-0479">Metal-binding</keyword>
<keyword id="KW-0547">Nucleotide-binding</keyword>
<keyword id="KW-0597">Phosphoprotein</keyword>
<keyword id="KW-1185">Reference proteome</keyword>
<keyword id="KW-0812">Transmembrane</keyword>
<keyword id="KW-1133">Transmembrane helix</keyword>
<gene>
    <name evidence="4" type="primary">ATL1</name>
    <name evidence="8" type="ORF">QflA-10403</name>
</gene>
<sequence length="558" mass="63515">MAKNRRDRNSWGGFSEKTYEWSSEEEEPVKKAGPVQVLIVKDDHSFELDETALNRILLSEAVRDKEVVAVSVAGAFRKGKSFLMDFMLRYMYNQESVDWVGDYNEPLTGFSWRGGSERETTGIQIWSEVFLINKPDGKKVAVLLMDTQGTFDSQSTLRDSATVFALSTMISSIQVYNLSQNVQEDDLQHLQLFTEYGRLAMEETFLKPFQSLIFLVRDWSFPYEFSYGADGGAKFLEKRLKVSGNQHEELQNVRKHIHSCFTNISCFLLPHPGLKVATNPNFDGKLKEIDDEFIKNLKILIPWLLSPESLDIKEINGNKITCRGLVEYFKAYIKIYQGEELPHPKSMLQATAEANNLAAVATAKDTYNKKMEEICGGDKPFLAPNDLQSKHLQLKEESVKLFRGVKKMGGEEFSRRYLQQLESEIDELYIQYIKHNDSKNIFHAARTPATLFVVIFITYVIAGVTGFIGLDIIASLCNMIMGLTLITLCTWAYIRYSGEYRELGAVIDQVAAALWDQGSTNEALYKLYSAAATHRHLYHQAFPTPKSESTEQSEKKKM</sequence>
<protein>
    <recommendedName>
        <fullName evidence="4">Atlastin-1</fullName>
        <ecNumber evidence="4">3.6.5.-</ecNumber>
    </recommendedName>
</protein>
<evidence type="ECO:0000250" key="1">
    <source>
        <dbReference type="UniProtKB" id="Q6DD88"/>
    </source>
</evidence>
<evidence type="ECO:0000250" key="2">
    <source>
        <dbReference type="UniProtKB" id="Q6PST4"/>
    </source>
</evidence>
<evidence type="ECO:0000250" key="3">
    <source>
        <dbReference type="UniProtKB" id="Q8BH66"/>
    </source>
</evidence>
<evidence type="ECO:0000250" key="4">
    <source>
        <dbReference type="UniProtKB" id="Q8WXF7"/>
    </source>
</evidence>
<evidence type="ECO:0000255" key="5"/>
<evidence type="ECO:0000255" key="6">
    <source>
        <dbReference type="PROSITE-ProRule" id="PRU01052"/>
    </source>
</evidence>
<evidence type="ECO:0000256" key="7">
    <source>
        <dbReference type="SAM" id="MobiDB-lite"/>
    </source>
</evidence>
<evidence type="ECO:0000312" key="8">
    <source>
        <dbReference type="EMBL" id="BAD51983.1"/>
    </source>
</evidence>
<reference key="1">
    <citation type="submission" date="2003-10" db="EMBL/GenBank/DDBJ databases">
        <title>Isolation and characterization of cDNA for macaque neurological disease genes.</title>
        <authorList>
            <person name="Kusuda J."/>
            <person name="Osada N."/>
            <person name="Tanuma R."/>
            <person name="Hirata M."/>
            <person name="Sugano S."/>
            <person name="Hashimoto K."/>
        </authorList>
    </citation>
    <scope>NUCLEOTIDE SEQUENCE [LARGE SCALE MRNA]</scope>
    <source>
        <tissue>Frontal cortex</tissue>
    </source>
</reference>
<proteinExistence type="evidence at transcript level"/>
<accession>Q60HD2</accession>
<name>ATLA1_MACFA</name>
<comment type="function">
    <text evidence="2 4">Atlastin-1 (ATL1) is a membrane-anchored GTPase that mediates the GTP-dependent fusion of endoplasmic reticulum (ER) membranes, maintaining the continuous ER network. It facilitates the formation of three-way junctions where ER tubules intersect. Two atlastin-1 on neighboring ER tubules bind GTP and form loose homodimers through the GB1/RHD3-type G domains and 3HB regions. Upon GTP hydrolysis, the 3HB regions tighten, pulling the membranes together to drive their fusion. After fusion, the homodimer disassembles upon release of inorganic phosphate (Pi). Subsequently, GDP dissociates, resetting the monomers to a conformation ready for a new fusion cycle. May also regulate more or less directly Golgi biogenesis (By similarity). Indirectly regulates axonal development (By similarity).</text>
</comment>
<comment type="catalytic activity">
    <reaction evidence="4">
        <text>GTP + H2O = GDP + phosphate + H(+)</text>
        <dbReference type="Rhea" id="RHEA:19669"/>
        <dbReference type="ChEBI" id="CHEBI:15377"/>
        <dbReference type="ChEBI" id="CHEBI:15378"/>
        <dbReference type="ChEBI" id="CHEBI:37565"/>
        <dbReference type="ChEBI" id="CHEBI:43474"/>
        <dbReference type="ChEBI" id="CHEBI:58189"/>
    </reaction>
    <physiologicalReaction direction="left-to-right" evidence="4">
        <dbReference type="Rhea" id="RHEA:19670"/>
    </physiologicalReaction>
</comment>
<comment type="subunit">
    <text evidence="2 4">Monomeric and homodimeric. The homodimer, transiently formed by two molecules on opposing membranes, is the active form mediating ER membrane fusion. Interacts with REEP1, REEP5, RTN3 and RTN4 (via the transmembrane region); these proteins are involved in endoplasmic reticulum tubular network organization. Interacts with ZFYVE27; both proteins are involved in endoplasmic reticulum tubular network organization (By similarity). Interacts with ARL6IP1; both proteins are involved in endoplasmic reticulum tubular network organization (By similarity). Interacts with SPAST; the interaction is direct, could recruit SPAST to Golgi membranes. Interacts (via N-terminal region) with MAP4K4 (via CNH regulatory domain). May interact with TMED2. Interacts with CPT1C (By similarity).</text>
</comment>
<comment type="subcellular location">
    <subcellularLocation>
        <location evidence="4">Endoplasmic reticulum membrane</location>
        <topology evidence="4">Multi-pass membrane protein</topology>
    </subcellularLocation>
    <subcellularLocation>
        <location evidence="4">Golgi apparatus membrane</location>
        <topology evidence="4">Multi-pass membrane protein</topology>
    </subcellularLocation>
    <subcellularLocation>
        <location evidence="2">Cell projection</location>
        <location evidence="2">Axon</location>
    </subcellularLocation>
    <text evidence="4">Localizes to endoplasmic reticulum tubular network.</text>
</comment>
<comment type="domain">
    <text evidence="4">The N-terminal hypervariable region (HVR) regulates ATL1-mediated membrane tethering by organizing ATL1 into a lattice structure on the same membrane. It does not affect GTP hydrolysis or membrane fusion. It has no effect on the GTP hydrolysis and fusion steps.</text>
</comment>
<comment type="domain">
    <text evidence="4">The GB1/RHD3-type G domain mediates GTP-binding and hydrolysis as well as homodimerization.</text>
</comment>
<comment type="domain">
    <text evidence="4">The two three-helix bundle (3HB) regions in the homodimer are loosely associated initially, but they tighten upon GTP hydrolysis, facilitating the fusion of membranes.</text>
</comment>
<comment type="domain">
    <text evidence="4">The C-terminal autoinhibitory domain negatively regulates the GTPase-dependent fusogenic activity without affecting GTP-binding.</text>
</comment>
<comment type="PTM">
    <text evidence="4">Phosphorylated. Phosphorylation, by different kinases, of the N-terminal hypervariable region (HVR) regulates the ATL1-mediated membrane tethering step.</text>
</comment>
<comment type="similarity">
    <text evidence="6">Belongs to the TRAFAC class dynamin-like GTPase superfamily. GB1/RHD3 GTPase family. GB1 subfamily.</text>
</comment>
<organism>
    <name type="scientific">Macaca fascicularis</name>
    <name type="common">Crab-eating macaque</name>
    <name type="synonym">Cynomolgus monkey</name>
    <dbReference type="NCBI Taxonomy" id="9541"/>
    <lineage>
        <taxon>Eukaryota</taxon>
        <taxon>Metazoa</taxon>
        <taxon>Chordata</taxon>
        <taxon>Craniata</taxon>
        <taxon>Vertebrata</taxon>
        <taxon>Euteleostomi</taxon>
        <taxon>Mammalia</taxon>
        <taxon>Eutheria</taxon>
        <taxon>Euarchontoglires</taxon>
        <taxon>Primates</taxon>
        <taxon>Haplorrhini</taxon>
        <taxon>Catarrhini</taxon>
        <taxon>Cercopithecidae</taxon>
        <taxon>Cercopithecinae</taxon>
        <taxon>Macaca</taxon>
    </lineage>
</organism>